<gene>
    <name evidence="1" type="primary">acpP</name>
    <name type="ordered locus">RoseRS_0984</name>
</gene>
<organism>
    <name type="scientific">Roseiflexus sp. (strain RS-1)</name>
    <dbReference type="NCBI Taxonomy" id="357808"/>
    <lineage>
        <taxon>Bacteria</taxon>
        <taxon>Bacillati</taxon>
        <taxon>Chloroflexota</taxon>
        <taxon>Chloroflexia</taxon>
        <taxon>Chloroflexales</taxon>
        <taxon>Roseiflexineae</taxon>
        <taxon>Roseiflexaceae</taxon>
        <taxon>Roseiflexus</taxon>
    </lineage>
</organism>
<feature type="chain" id="PRO_1000066683" description="Acyl carrier protein">
    <location>
        <begin position="1"/>
        <end position="82"/>
    </location>
</feature>
<feature type="domain" description="Carrier" evidence="2">
    <location>
        <begin position="4"/>
        <end position="79"/>
    </location>
</feature>
<feature type="modified residue" description="O-(pantetheine 4'-phosphoryl)serine" evidence="2">
    <location>
        <position position="39"/>
    </location>
</feature>
<dbReference type="EMBL" id="CP000686">
    <property type="protein sequence ID" value="ABQ89393.1"/>
    <property type="molecule type" value="Genomic_DNA"/>
</dbReference>
<dbReference type="RefSeq" id="WP_011955746.1">
    <property type="nucleotide sequence ID" value="NC_009523.1"/>
</dbReference>
<dbReference type="SMR" id="A5URZ0"/>
<dbReference type="STRING" id="357808.RoseRS_0984"/>
<dbReference type="KEGG" id="rrs:RoseRS_0984"/>
<dbReference type="eggNOG" id="COG0236">
    <property type="taxonomic scope" value="Bacteria"/>
</dbReference>
<dbReference type="HOGENOM" id="CLU_108696_5_1_0"/>
<dbReference type="OrthoDB" id="9804551at2"/>
<dbReference type="UniPathway" id="UPA00094"/>
<dbReference type="Proteomes" id="UP000006554">
    <property type="component" value="Chromosome"/>
</dbReference>
<dbReference type="GO" id="GO:0005829">
    <property type="term" value="C:cytosol"/>
    <property type="evidence" value="ECO:0007669"/>
    <property type="project" value="TreeGrafter"/>
</dbReference>
<dbReference type="GO" id="GO:0016020">
    <property type="term" value="C:membrane"/>
    <property type="evidence" value="ECO:0007669"/>
    <property type="project" value="GOC"/>
</dbReference>
<dbReference type="GO" id="GO:0000035">
    <property type="term" value="F:acyl binding"/>
    <property type="evidence" value="ECO:0007669"/>
    <property type="project" value="TreeGrafter"/>
</dbReference>
<dbReference type="GO" id="GO:0000036">
    <property type="term" value="F:acyl carrier activity"/>
    <property type="evidence" value="ECO:0007669"/>
    <property type="project" value="UniProtKB-UniRule"/>
</dbReference>
<dbReference type="GO" id="GO:0009245">
    <property type="term" value="P:lipid A biosynthetic process"/>
    <property type="evidence" value="ECO:0007669"/>
    <property type="project" value="TreeGrafter"/>
</dbReference>
<dbReference type="FunFam" id="1.10.1200.10:FF:000001">
    <property type="entry name" value="Acyl carrier protein"/>
    <property type="match status" value="1"/>
</dbReference>
<dbReference type="Gene3D" id="1.10.1200.10">
    <property type="entry name" value="ACP-like"/>
    <property type="match status" value="1"/>
</dbReference>
<dbReference type="HAMAP" id="MF_01217">
    <property type="entry name" value="Acyl_carrier"/>
    <property type="match status" value="1"/>
</dbReference>
<dbReference type="InterPro" id="IPR003231">
    <property type="entry name" value="ACP"/>
</dbReference>
<dbReference type="InterPro" id="IPR036736">
    <property type="entry name" value="ACP-like_sf"/>
</dbReference>
<dbReference type="InterPro" id="IPR009081">
    <property type="entry name" value="PP-bd_ACP"/>
</dbReference>
<dbReference type="InterPro" id="IPR006162">
    <property type="entry name" value="Ppantetheine_attach_site"/>
</dbReference>
<dbReference type="NCBIfam" id="TIGR00517">
    <property type="entry name" value="acyl_carrier"/>
    <property type="match status" value="1"/>
</dbReference>
<dbReference type="NCBIfam" id="NF002148">
    <property type="entry name" value="PRK00982.1-2"/>
    <property type="match status" value="1"/>
</dbReference>
<dbReference type="NCBIfam" id="NF002149">
    <property type="entry name" value="PRK00982.1-3"/>
    <property type="match status" value="1"/>
</dbReference>
<dbReference type="NCBIfam" id="NF002150">
    <property type="entry name" value="PRK00982.1-4"/>
    <property type="match status" value="1"/>
</dbReference>
<dbReference type="NCBIfam" id="NF002151">
    <property type="entry name" value="PRK00982.1-5"/>
    <property type="match status" value="1"/>
</dbReference>
<dbReference type="PANTHER" id="PTHR20863">
    <property type="entry name" value="ACYL CARRIER PROTEIN"/>
    <property type="match status" value="1"/>
</dbReference>
<dbReference type="PANTHER" id="PTHR20863:SF76">
    <property type="entry name" value="CARRIER DOMAIN-CONTAINING PROTEIN"/>
    <property type="match status" value="1"/>
</dbReference>
<dbReference type="Pfam" id="PF00550">
    <property type="entry name" value="PP-binding"/>
    <property type="match status" value="1"/>
</dbReference>
<dbReference type="SUPFAM" id="SSF47336">
    <property type="entry name" value="ACP-like"/>
    <property type="match status" value="1"/>
</dbReference>
<dbReference type="PROSITE" id="PS50075">
    <property type="entry name" value="CARRIER"/>
    <property type="match status" value="1"/>
</dbReference>
<dbReference type="PROSITE" id="PS00012">
    <property type="entry name" value="PHOSPHOPANTETHEINE"/>
    <property type="match status" value="1"/>
</dbReference>
<reference key="1">
    <citation type="submission" date="2007-04" db="EMBL/GenBank/DDBJ databases">
        <title>Complete sequence of Roseiflexus sp. RS-1.</title>
        <authorList>
            <consortium name="US DOE Joint Genome Institute"/>
            <person name="Copeland A."/>
            <person name="Lucas S."/>
            <person name="Lapidus A."/>
            <person name="Barry K."/>
            <person name="Detter J.C."/>
            <person name="Glavina del Rio T."/>
            <person name="Hammon N."/>
            <person name="Israni S."/>
            <person name="Dalin E."/>
            <person name="Tice H."/>
            <person name="Pitluck S."/>
            <person name="Chertkov O."/>
            <person name="Brettin T."/>
            <person name="Bruce D."/>
            <person name="Han C."/>
            <person name="Schmutz J."/>
            <person name="Larimer F."/>
            <person name="Land M."/>
            <person name="Hauser L."/>
            <person name="Kyrpides N."/>
            <person name="Mikhailova N."/>
            <person name="Bryant D.A."/>
            <person name="Richardson P."/>
        </authorList>
    </citation>
    <scope>NUCLEOTIDE SEQUENCE [LARGE SCALE GENOMIC DNA]</scope>
    <source>
        <strain>RS-1</strain>
    </source>
</reference>
<name>ACP_ROSS1</name>
<sequence length="82" mass="9239">MPSPEMESRLKKIVAEQLGVDESKIVPEARFTEDLNADSLDLVEMIMELEEAFGVEIPDEDAEKIMTVQDALNYIEQKLQAA</sequence>
<comment type="function">
    <text evidence="1">Carrier of the growing fatty acid chain in fatty acid biosynthesis.</text>
</comment>
<comment type="pathway">
    <text evidence="1">Lipid metabolism; fatty acid biosynthesis.</text>
</comment>
<comment type="subcellular location">
    <subcellularLocation>
        <location evidence="1">Cytoplasm</location>
    </subcellularLocation>
</comment>
<comment type="PTM">
    <text evidence="1">4'-phosphopantetheine is transferred from CoA to a specific serine of apo-ACP by AcpS. This modification is essential for activity because fatty acids are bound in thioester linkage to the sulfhydryl of the prosthetic group.</text>
</comment>
<comment type="similarity">
    <text evidence="1">Belongs to the acyl carrier protein (ACP) family.</text>
</comment>
<protein>
    <recommendedName>
        <fullName evidence="1">Acyl carrier protein</fullName>
        <shortName evidence="1">ACP</shortName>
    </recommendedName>
</protein>
<proteinExistence type="inferred from homology"/>
<keyword id="KW-0963">Cytoplasm</keyword>
<keyword id="KW-0275">Fatty acid biosynthesis</keyword>
<keyword id="KW-0276">Fatty acid metabolism</keyword>
<keyword id="KW-0444">Lipid biosynthesis</keyword>
<keyword id="KW-0443">Lipid metabolism</keyword>
<keyword id="KW-0596">Phosphopantetheine</keyword>
<keyword id="KW-0597">Phosphoprotein</keyword>
<accession>A5URZ0</accession>
<evidence type="ECO:0000255" key="1">
    <source>
        <dbReference type="HAMAP-Rule" id="MF_01217"/>
    </source>
</evidence>
<evidence type="ECO:0000255" key="2">
    <source>
        <dbReference type="PROSITE-ProRule" id="PRU00258"/>
    </source>
</evidence>